<reference key="1">
    <citation type="journal article" date="2008" name="J. Bacteriol.">
        <title>Genome sequence of Staphylococcus aureus strain Newman and comparative analysis of staphylococcal genomes: polymorphism and evolution of two major pathogenicity islands.</title>
        <authorList>
            <person name="Baba T."/>
            <person name="Bae T."/>
            <person name="Schneewind O."/>
            <person name="Takeuchi F."/>
            <person name="Hiramatsu K."/>
        </authorList>
    </citation>
    <scope>NUCLEOTIDE SEQUENCE [LARGE SCALE GENOMIC DNA]</scope>
    <source>
        <strain>Newman</strain>
    </source>
</reference>
<reference key="2">
    <citation type="journal article" date="2012" name="Infect. Immun.">
        <title>Structural and functional properties of staphylococcal superantigen-like protein 4.</title>
        <authorList>
            <person name="Hermans S.J."/>
            <person name="Baker H.M."/>
            <person name="Sequeira R.P."/>
            <person name="Langley R.J."/>
            <person name="Baker E.N."/>
            <person name="Fraser J.D."/>
        </authorList>
    </citation>
    <scope>X-RAY CRYSTALLOGRAPHY (1.70 ANGSTROMS) OF 109-308</scope>
</reference>
<protein>
    <recommendedName>
        <fullName evidence="2">Staphylococcal superantigen-like 4</fullName>
    </recommendedName>
</protein>
<keyword id="KW-0002">3D-structure</keyword>
<keyword id="KW-0964">Secreted</keyword>
<keyword id="KW-0732">Signal</keyword>
<keyword id="KW-0843">Virulence</keyword>
<evidence type="ECO:0000250" key="1">
    <source>
        <dbReference type="UniProtKB" id="Q2G0X7"/>
    </source>
</evidence>
<evidence type="ECO:0000250" key="2">
    <source>
        <dbReference type="UniProtKB" id="Q2G1S8"/>
    </source>
</evidence>
<evidence type="ECO:0000255" key="3"/>
<evidence type="ECO:0000256" key="4">
    <source>
        <dbReference type="SAM" id="MobiDB-lite"/>
    </source>
</evidence>
<evidence type="ECO:0000305" key="5"/>
<evidence type="ECO:0007829" key="6">
    <source>
        <dbReference type="PDB" id="4DXF"/>
    </source>
</evidence>
<comment type="function">
    <text evidence="2">Secreted protein that plays a role in immune innate response inhibition by interfering with host TLR2-mediated pathway.</text>
</comment>
<comment type="subcellular location">
    <subcellularLocation>
        <location evidence="2">Secreted</location>
    </subcellularLocation>
</comment>
<comment type="domain">
    <text evidence="1">The C-terminal domain contains a V-shape binding site for sialyl Lewis X.</text>
</comment>
<comment type="similarity">
    <text evidence="5">Belongs to the staphylococcal/streptococcal toxin family.</text>
</comment>
<name>SSL4_STAAE</name>
<proteinExistence type="evidence at protein level"/>
<feature type="signal peptide" evidence="3">
    <location>
        <begin position="1"/>
        <end position="30"/>
    </location>
</feature>
<feature type="chain" id="PRO_5002613223" description="Staphylococcal superantigen-like 4" evidence="3">
    <location>
        <begin position="31"/>
        <end position="308"/>
    </location>
</feature>
<feature type="region of interest" description="Disordered" evidence="4">
    <location>
        <begin position="28"/>
        <end position="117"/>
    </location>
</feature>
<feature type="region of interest" description="Sialyl Lewis X-binding" evidence="1">
    <location>
        <begin position="180"/>
        <end position="278"/>
    </location>
</feature>
<feature type="compositionally biased region" description="Polar residues" evidence="4">
    <location>
        <begin position="33"/>
        <end position="47"/>
    </location>
</feature>
<feature type="compositionally biased region" description="Polar residues" evidence="4">
    <location>
        <begin position="55"/>
        <end position="76"/>
    </location>
</feature>
<feature type="compositionally biased region" description="Low complexity" evidence="4">
    <location>
        <begin position="77"/>
        <end position="93"/>
    </location>
</feature>
<feature type="compositionally biased region" description="Polar residues" evidence="4">
    <location>
        <begin position="94"/>
        <end position="114"/>
    </location>
</feature>
<feature type="helix" evidence="6">
    <location>
        <begin position="118"/>
        <end position="120"/>
    </location>
</feature>
<feature type="helix" evidence="6">
    <location>
        <begin position="121"/>
        <end position="126"/>
    </location>
</feature>
<feature type="strand" evidence="6">
    <location>
        <begin position="132"/>
        <end position="141"/>
    </location>
</feature>
<feature type="strand" evidence="6">
    <location>
        <begin position="146"/>
        <end position="148"/>
    </location>
</feature>
<feature type="strand" evidence="6">
    <location>
        <begin position="150"/>
        <end position="153"/>
    </location>
</feature>
<feature type="strand" evidence="6">
    <location>
        <begin position="155"/>
        <end position="158"/>
    </location>
</feature>
<feature type="strand" evidence="6">
    <location>
        <begin position="160"/>
        <end position="163"/>
    </location>
</feature>
<feature type="helix" evidence="6">
    <location>
        <begin position="168"/>
        <end position="171"/>
    </location>
</feature>
<feature type="strand" evidence="6">
    <location>
        <begin position="174"/>
        <end position="184"/>
    </location>
</feature>
<feature type="strand" evidence="6">
    <location>
        <begin position="194"/>
        <end position="198"/>
    </location>
</feature>
<feature type="strand" evidence="6">
    <location>
        <begin position="201"/>
        <end position="203"/>
    </location>
</feature>
<feature type="strand" evidence="6">
    <location>
        <begin position="211"/>
        <end position="220"/>
    </location>
</feature>
<feature type="strand" evidence="6">
    <location>
        <begin position="226"/>
        <end position="235"/>
    </location>
</feature>
<feature type="strand" evidence="6">
    <location>
        <begin position="238"/>
        <end position="241"/>
    </location>
</feature>
<feature type="helix" evidence="6">
    <location>
        <begin position="242"/>
        <end position="257"/>
    </location>
</feature>
<feature type="turn" evidence="6">
    <location>
        <begin position="260"/>
        <end position="262"/>
    </location>
</feature>
<feature type="strand" evidence="6">
    <location>
        <begin position="265"/>
        <end position="272"/>
    </location>
</feature>
<feature type="strand" evidence="6">
    <location>
        <begin position="277"/>
        <end position="281"/>
    </location>
</feature>
<feature type="helix" evidence="6">
    <location>
        <begin position="288"/>
        <end position="291"/>
    </location>
</feature>
<feature type="strand" evidence="6">
    <location>
        <begin position="294"/>
        <end position="296"/>
    </location>
</feature>
<feature type="helix" evidence="6">
    <location>
        <begin position="297"/>
        <end position="299"/>
    </location>
</feature>
<feature type="strand" evidence="6">
    <location>
        <begin position="300"/>
        <end position="308"/>
    </location>
</feature>
<sequence length="308" mass="34056">MKITTIAKTSLALGLLTTGVITTTTQAANATTPSSTKVEAPQSTPPSTKIEAPQSKPNATTPPSTKVEAPQQTANATTPPSTKVTTPPSTNTPQPMQSTKSDTPQSPTTKQVPTEINPKFKDLRAYYTKPSLEFKNEIGIILKKWTTIRFMNVVPDYFIYKIALVGKDDKKYGEGVHRNVDVFVVLEENNYNLEKYSVGGITKSNSKKVDHKAGVRITKEDNKGTISHDVSEFKITKEQISLKELDFKLRKQLIEKNNLYGNVGSGKIVIKMKNGGKYTFELHKKLQENRMADVIDGTNIDNIEVNIK</sequence>
<gene>
    <name evidence="2" type="primary">ssl4</name>
    <name type="ordered locus">NWMN_0391</name>
</gene>
<accession>A0A0H3K6A3</accession>
<dbReference type="EMBL" id="AP009351">
    <property type="protein sequence ID" value="BAF66663.1"/>
    <property type="molecule type" value="Genomic_DNA"/>
</dbReference>
<dbReference type="RefSeq" id="WP_000705644.1">
    <property type="nucleotide sequence ID" value="NZ_JBBIAE010000011.1"/>
</dbReference>
<dbReference type="PDB" id="4DXF">
    <property type="method" value="X-ray"/>
    <property type="resolution" value="1.70 A"/>
    <property type="chains" value="A/B=109-308"/>
</dbReference>
<dbReference type="PDB" id="4DXG">
    <property type="method" value="X-ray"/>
    <property type="resolution" value="2.50 A"/>
    <property type="chains" value="A=109-308"/>
</dbReference>
<dbReference type="PDBsum" id="4DXF"/>
<dbReference type="PDBsum" id="4DXG"/>
<dbReference type="SMR" id="A0A0H3K6A3"/>
<dbReference type="UniLectin" id="A0A0H3K6A3"/>
<dbReference type="KEGG" id="sae:NWMN_0391"/>
<dbReference type="HOGENOM" id="CLU_054950_1_0_9"/>
<dbReference type="EvolutionaryTrace" id="A0A0H3K6A3"/>
<dbReference type="Proteomes" id="UP000006386">
    <property type="component" value="Chromosome"/>
</dbReference>
<dbReference type="GO" id="GO:0005576">
    <property type="term" value="C:extracellular region"/>
    <property type="evidence" value="ECO:0007669"/>
    <property type="project" value="UniProtKB-SubCell"/>
</dbReference>
<dbReference type="Gene3D" id="2.40.50.110">
    <property type="match status" value="1"/>
</dbReference>
<dbReference type="Gene3D" id="3.10.20.120">
    <property type="match status" value="1"/>
</dbReference>
<dbReference type="InterPro" id="IPR008992">
    <property type="entry name" value="Enterotoxin"/>
</dbReference>
<dbReference type="InterPro" id="IPR015282">
    <property type="entry name" value="SSL_OB"/>
</dbReference>
<dbReference type="InterPro" id="IPR006126">
    <property type="entry name" value="Staph/Strept_toxin_CS"/>
</dbReference>
<dbReference type="InterPro" id="IPR008375">
    <property type="entry name" value="Staph_exotoxin"/>
</dbReference>
<dbReference type="InterPro" id="IPR016091">
    <property type="entry name" value="SuperAg_toxin_C"/>
</dbReference>
<dbReference type="InterPro" id="IPR013307">
    <property type="entry name" value="Superantigen_bac"/>
</dbReference>
<dbReference type="InterPro" id="IPR006123">
    <property type="entry name" value="Toxin_b-grasp_Staph/Strep"/>
</dbReference>
<dbReference type="NCBIfam" id="NF009600">
    <property type="entry name" value="PRK13042.1"/>
    <property type="match status" value="1"/>
</dbReference>
<dbReference type="Pfam" id="PF09199">
    <property type="entry name" value="SSL_OB"/>
    <property type="match status" value="1"/>
</dbReference>
<dbReference type="Pfam" id="PF02876">
    <property type="entry name" value="Stap_Strp_tox_C"/>
    <property type="match status" value="1"/>
</dbReference>
<dbReference type="PRINTS" id="PR01898">
    <property type="entry name" value="SAGSUPRFAMLY"/>
</dbReference>
<dbReference type="PRINTS" id="PR01800">
    <property type="entry name" value="STAPHEXOTOXN"/>
</dbReference>
<dbReference type="PRINTS" id="PR01501">
    <property type="entry name" value="TOXICSSTOXIN"/>
</dbReference>
<dbReference type="SUPFAM" id="SSF50203">
    <property type="entry name" value="Bacterial enterotoxins"/>
    <property type="match status" value="1"/>
</dbReference>
<dbReference type="SUPFAM" id="SSF54334">
    <property type="entry name" value="Superantigen toxins, C-terminal domain"/>
    <property type="match status" value="1"/>
</dbReference>
<dbReference type="PROSITE" id="PS00278">
    <property type="entry name" value="STAPH_STREP_TOXIN_2"/>
    <property type="match status" value="1"/>
</dbReference>
<organism>
    <name type="scientific">Staphylococcus aureus (strain Newman)</name>
    <dbReference type="NCBI Taxonomy" id="426430"/>
    <lineage>
        <taxon>Bacteria</taxon>
        <taxon>Bacillati</taxon>
        <taxon>Bacillota</taxon>
        <taxon>Bacilli</taxon>
        <taxon>Bacillales</taxon>
        <taxon>Staphylococcaceae</taxon>
        <taxon>Staphylococcus</taxon>
    </lineage>
</organism>